<keyword id="KW-0997">Cell inner membrane</keyword>
<keyword id="KW-1003">Cell membrane</keyword>
<keyword id="KW-0472">Membrane</keyword>
<keyword id="KW-1185">Reference proteome</keyword>
<keyword id="KW-0769">Symport</keyword>
<keyword id="KW-0812">Transmembrane</keyword>
<keyword id="KW-1133">Transmembrane helix</keyword>
<keyword id="KW-0813">Transport</keyword>
<dbReference type="EMBL" id="CU928145">
    <property type="protein sequence ID" value="CAV00434.1"/>
    <property type="molecule type" value="Genomic_DNA"/>
</dbReference>
<dbReference type="RefSeq" id="WP_000858214.1">
    <property type="nucleotide sequence ID" value="NZ_CP028304.1"/>
</dbReference>
<dbReference type="SMR" id="B7L612"/>
<dbReference type="GeneID" id="93778248"/>
<dbReference type="KEGG" id="eck:EC55989_3975"/>
<dbReference type="HOGENOM" id="CLU_019375_7_0_6"/>
<dbReference type="Proteomes" id="UP000000746">
    <property type="component" value="Chromosome"/>
</dbReference>
<dbReference type="GO" id="GO:0005886">
    <property type="term" value="C:plasma membrane"/>
    <property type="evidence" value="ECO:0007669"/>
    <property type="project" value="UniProtKB-SubCell"/>
</dbReference>
<dbReference type="GO" id="GO:0015138">
    <property type="term" value="F:fumarate transmembrane transporter activity"/>
    <property type="evidence" value="ECO:0007669"/>
    <property type="project" value="TreeGrafter"/>
</dbReference>
<dbReference type="GO" id="GO:0015366">
    <property type="term" value="F:malate:proton symporter activity"/>
    <property type="evidence" value="ECO:0007669"/>
    <property type="project" value="TreeGrafter"/>
</dbReference>
<dbReference type="GO" id="GO:0015141">
    <property type="term" value="F:succinate transmembrane transporter activity"/>
    <property type="evidence" value="ECO:0007669"/>
    <property type="project" value="TreeGrafter"/>
</dbReference>
<dbReference type="GO" id="GO:0070778">
    <property type="term" value="P:L-aspartate transmembrane transport"/>
    <property type="evidence" value="ECO:0007669"/>
    <property type="project" value="TreeGrafter"/>
</dbReference>
<dbReference type="FunFam" id="1.10.3860.10:FF:000001">
    <property type="entry name" value="C4-dicarboxylate transport protein"/>
    <property type="match status" value="1"/>
</dbReference>
<dbReference type="Gene3D" id="1.10.3860.10">
    <property type="entry name" value="Sodium:dicarboxylate symporter"/>
    <property type="match status" value="1"/>
</dbReference>
<dbReference type="HAMAP" id="MF_01300">
    <property type="entry name" value="C4_dicarb_transport"/>
    <property type="match status" value="1"/>
</dbReference>
<dbReference type="InterPro" id="IPR023954">
    <property type="entry name" value="C4_dicarb_transport"/>
</dbReference>
<dbReference type="InterPro" id="IPR001991">
    <property type="entry name" value="Na-dicarboxylate_symporter"/>
</dbReference>
<dbReference type="InterPro" id="IPR018107">
    <property type="entry name" value="Na-dicarboxylate_symporter_CS"/>
</dbReference>
<dbReference type="InterPro" id="IPR036458">
    <property type="entry name" value="Na:dicarbo_symporter_sf"/>
</dbReference>
<dbReference type="NCBIfam" id="NF002461">
    <property type="entry name" value="PRK01663.1"/>
    <property type="match status" value="1"/>
</dbReference>
<dbReference type="NCBIfam" id="NF009587">
    <property type="entry name" value="PRK13027.1"/>
    <property type="match status" value="1"/>
</dbReference>
<dbReference type="PANTHER" id="PTHR42865:SF1">
    <property type="entry name" value="AEROBIC C4-DICARBOXYLATE TRANSPORT PROTEIN"/>
    <property type="match status" value="1"/>
</dbReference>
<dbReference type="PANTHER" id="PTHR42865">
    <property type="entry name" value="PROTON/GLUTAMATE-ASPARTATE SYMPORTER"/>
    <property type="match status" value="1"/>
</dbReference>
<dbReference type="Pfam" id="PF00375">
    <property type="entry name" value="SDF"/>
    <property type="match status" value="1"/>
</dbReference>
<dbReference type="PRINTS" id="PR00173">
    <property type="entry name" value="EDTRNSPORT"/>
</dbReference>
<dbReference type="SUPFAM" id="SSF118215">
    <property type="entry name" value="Proton glutamate symport protein"/>
    <property type="match status" value="1"/>
</dbReference>
<dbReference type="PROSITE" id="PS00713">
    <property type="entry name" value="NA_DICARBOXYL_SYMP_1"/>
    <property type="match status" value="1"/>
</dbReference>
<dbReference type="PROSITE" id="PS00714">
    <property type="entry name" value="NA_DICARBOXYL_SYMP_2"/>
    <property type="match status" value="1"/>
</dbReference>
<accession>B7L612</accession>
<gene>
    <name evidence="1" type="primary">dctA</name>
    <name type="ordered locus">EC55989_3975</name>
</gene>
<proteinExistence type="inferred from homology"/>
<organism>
    <name type="scientific">Escherichia coli (strain 55989 / EAEC)</name>
    <dbReference type="NCBI Taxonomy" id="585055"/>
    <lineage>
        <taxon>Bacteria</taxon>
        <taxon>Pseudomonadati</taxon>
        <taxon>Pseudomonadota</taxon>
        <taxon>Gammaproteobacteria</taxon>
        <taxon>Enterobacterales</taxon>
        <taxon>Enterobacteriaceae</taxon>
        <taxon>Escherichia</taxon>
    </lineage>
</organism>
<protein>
    <recommendedName>
        <fullName evidence="1">C4-dicarboxylate transport protein</fullName>
    </recommendedName>
</protein>
<sequence>MKTSLFKSLYFQVLTAIAIGILLGHFYPEIGEQMKPLGDGFVKLIKMIIAPVIFCTVVTGIAGMESMKAVGRTGAVALLYFEIVSTIALIIGLIIVNVVQPGAGMNVDPATLDAKAVAVYADQAKDQGIVAFIMDVIPASVIGAFASGNILQVLLFAVLFGFALHRLGSKGQLIFNVIESFSQVIFGIINMIMRLAPIGAFGAMAFTIGKYGVGTLVQLGQLIICFYITCILFVVLVLGSIAKATGFSIFKFIRYIREELLIVLGTSSSESALPRMLDKMEKLGCRKSVVGLVIPTGYSFNLDGTSIYLTMAAVFIAQATNSQMDIVHQITLLIVLLLSSKGAAGVTGSGFIVLAATLSAVGHLPVAGLALILGIDRFMSEARALTNLVGNGVATIVVAKWVKELDHKKLDDVLNNRAPDGKTHELSS</sequence>
<evidence type="ECO:0000255" key="1">
    <source>
        <dbReference type="HAMAP-Rule" id="MF_01300"/>
    </source>
</evidence>
<name>DCTA_ECO55</name>
<reference key="1">
    <citation type="journal article" date="2009" name="PLoS Genet.">
        <title>Organised genome dynamics in the Escherichia coli species results in highly diverse adaptive paths.</title>
        <authorList>
            <person name="Touchon M."/>
            <person name="Hoede C."/>
            <person name="Tenaillon O."/>
            <person name="Barbe V."/>
            <person name="Baeriswyl S."/>
            <person name="Bidet P."/>
            <person name="Bingen E."/>
            <person name="Bonacorsi S."/>
            <person name="Bouchier C."/>
            <person name="Bouvet O."/>
            <person name="Calteau A."/>
            <person name="Chiapello H."/>
            <person name="Clermont O."/>
            <person name="Cruveiller S."/>
            <person name="Danchin A."/>
            <person name="Diard M."/>
            <person name="Dossat C."/>
            <person name="Karoui M.E."/>
            <person name="Frapy E."/>
            <person name="Garry L."/>
            <person name="Ghigo J.M."/>
            <person name="Gilles A.M."/>
            <person name="Johnson J."/>
            <person name="Le Bouguenec C."/>
            <person name="Lescat M."/>
            <person name="Mangenot S."/>
            <person name="Martinez-Jehanne V."/>
            <person name="Matic I."/>
            <person name="Nassif X."/>
            <person name="Oztas S."/>
            <person name="Petit M.A."/>
            <person name="Pichon C."/>
            <person name="Rouy Z."/>
            <person name="Ruf C.S."/>
            <person name="Schneider D."/>
            <person name="Tourret J."/>
            <person name="Vacherie B."/>
            <person name="Vallenet D."/>
            <person name="Medigue C."/>
            <person name="Rocha E.P.C."/>
            <person name="Denamur E."/>
        </authorList>
    </citation>
    <scope>NUCLEOTIDE SEQUENCE [LARGE SCALE GENOMIC DNA]</scope>
    <source>
        <strain>55989 / EAEC</strain>
    </source>
</reference>
<feature type="chain" id="PRO_1000165287" description="C4-dicarboxylate transport protein">
    <location>
        <begin position="1"/>
        <end position="428"/>
    </location>
</feature>
<feature type="transmembrane region" description="Helical" evidence="1">
    <location>
        <begin position="8"/>
        <end position="28"/>
    </location>
</feature>
<feature type="transmembrane region" description="Helical" evidence="1">
    <location>
        <begin position="44"/>
        <end position="64"/>
    </location>
</feature>
<feature type="transmembrane region" description="Helical" evidence="1">
    <location>
        <begin position="76"/>
        <end position="96"/>
    </location>
</feature>
<feature type="transmembrane region" description="Helical" evidence="1">
    <location>
        <begin position="142"/>
        <end position="162"/>
    </location>
</feature>
<feature type="transmembrane region" description="Helical" evidence="1">
    <location>
        <begin position="184"/>
        <end position="204"/>
    </location>
</feature>
<feature type="transmembrane region" description="Helical" evidence="1">
    <location>
        <begin position="222"/>
        <end position="242"/>
    </location>
</feature>
<feature type="transmembrane region" description="Helical" evidence="1">
    <location>
        <begin position="326"/>
        <end position="346"/>
    </location>
</feature>
<feature type="transmembrane region" description="Helical" evidence="1">
    <location>
        <begin position="352"/>
        <end position="372"/>
    </location>
</feature>
<comment type="function">
    <text evidence="1">Responsible for the transport of dicarboxylates such as succinate, fumarate, and malate from the periplasm across the membrane.</text>
</comment>
<comment type="subcellular location">
    <subcellularLocation>
        <location evidence="1">Cell inner membrane</location>
        <topology evidence="1">Multi-pass membrane protein</topology>
    </subcellularLocation>
</comment>
<comment type="similarity">
    <text evidence="1">Belongs to the dicarboxylate/amino acid:cation symporter (DAACS) (TC 2.A.23) family.</text>
</comment>